<comment type="function">
    <text evidence="1">Hydrolase that removes conjugated ubiquitin from target proteins and regulates various pathways such as the TGF-beta receptor signaling, NF-kappa-B and RNF41/NRDP1-PRKN pathways. Acts as a key regulator of TGF-beta receptor signaling pathway, but the precise mechanism is still unclear: according to a report, acts by promoting deubiquitination of monoubiquitinated R-SMADs (SMAD1, SMAD2 and/or SMAD3), thereby alleviating inhibition of R-SMADs and promoting activation of TGF-beta target genes. According to another reports, regulates the TGF-beta receptor signaling pathway by mediating deubiquitination and stabilization of TGFBR1, leading to an enhanced TGF-beta signal. Able to mediate deubiquitination of monoubiquitinated substrates, 'Lys-27'-, 'Lys-48'- and 'Lys-63'-linked polyubiquitin chains. May also regulate gene expression and/or DNA repair through the deubiquitination of histone H2B. Acts as an inhibitor of mitophagy by counteracting the action of parkin (PRKN): hydrolyzes cleavage of 'Lys-48'- and 'Lys-63'-linked polyubiquitin chains attached by parkin on target proteins such as MFN2, thereby reducing parkin's ability to drive mitophagy. Acts as an associated component of COP9 signalosome complex (CSN) and regulates different pathways via this association: regulates NF-kappa-B by mediating deubiquitination of NFKBIA and deubiquitinates substrates bound to VCP. Involved in endosome organization by mediating deubiquitination of SQSTM1: ubiquitinated SQSTM1 forms a molecular bridge that restrains cognate vesicles in the perinuclear region and its deubiquitination releases target vesicles for fast transport into the cell periphery. Acts as a negative regulator of antifungal immunity by mediating 'Lys-27'-linked deubiquitination of CARD9, thereby inactivating CARD9.</text>
</comment>
<comment type="catalytic activity">
    <reaction evidence="1">
        <text>Thiol-dependent hydrolysis of ester, thioester, amide, peptide and isopeptide bonds formed by the C-terminal Gly of ubiquitin (a 76-residue protein attached to proteins as an intracellular targeting signal).</text>
        <dbReference type="EC" id="3.4.19.12"/>
    </reaction>
</comment>
<comment type="subunit">
    <text evidence="1">A homodimer structure has been reported; however it is unclear whether the protein form a homodimer in vivo. Identified in a complex with the COP9 signalosome complex (CSN). Interacts with SMAD1, SMAD2 and SMAD3; the interaction is direct. Forms a complex with SMURF2 and SMAD7. Interacts with TGFBR1. Interacts with SART3; the interaction is direct. May interact with RNF20 and RNF40. May interact with PRKN. Interacts with INCA1.</text>
</comment>
<comment type="subcellular location">
    <subcellularLocation>
        <location evidence="8">Cytoplasm</location>
    </subcellularLocation>
    <subcellularLocation>
        <location evidence="1">Nucleus</location>
    </subcellularLocation>
    <subcellularLocation>
        <location evidence="1">Mitochondrion</location>
    </subcellularLocation>
</comment>
<comment type="alternative products">
    <event type="alternative splicing"/>
    <isoform>
        <id>Q8R5H1-1</id>
        <name>1</name>
        <sequence type="displayed"/>
    </isoform>
    <isoform>
        <id>Q8R5H1-2</id>
        <name>2</name>
        <sequence type="described" ref="VSP_005262 VSP_005263"/>
    </isoform>
    <isoform>
        <id>Q8R5H1-3</id>
        <name>3</name>
        <sequence type="described" ref="VSP_005264"/>
    </isoform>
    <isoform>
        <id>Q8R5H1-4</id>
        <name>4</name>
        <sequence type="described" ref="VSP_005265 VSP_005266"/>
    </isoform>
    <isoform>
        <id>Q8R5H1-5</id>
        <name>5</name>
        <sequence type="described" ref="VSP_005263"/>
    </isoform>
    <text>Experimental confirmation may be lacking for some isoforms.</text>
</comment>
<comment type="tissue specificity">
    <text evidence="7 8">Widely expressed with highest levels in the brain and spleen, and lowest levels in the muscles (at protein level) (PubMed:24852371). In the midbrain, strong expression in neurons including the dopaminergic neurons (at protein level) (PubMed:24852371). Widely expressed with highest levels in testis, heart and liver (PubMed:12532266).</text>
</comment>
<comment type="PTM">
    <text evidence="1">Phosphorylated. Phosphorylation protects against ubiquitination and subsequent degradation by the proteasome.</text>
</comment>
<comment type="PTM">
    <text evidence="1">Ubiquitinated, leading to degradation by the proteasome.</text>
</comment>
<comment type="similarity">
    <text evidence="12">Belongs to the peptidase C19 family.</text>
</comment>
<comment type="sequence caution" evidence="12">
    <conflict type="erroneous initiation">
        <sequence resource="EMBL-CDS" id="BAC65583"/>
    </conflict>
    <text>Extended N-terminus.</text>
</comment>
<comment type="sequence caution" evidence="12">
    <conflict type="erroneous initiation">
        <sequence resource="EMBL-CDS" id="EDL24441"/>
    </conflict>
    <text>Extended N-terminus.</text>
</comment>
<evidence type="ECO:0000250" key="1">
    <source>
        <dbReference type="UniProtKB" id="Q9Y4E8"/>
    </source>
</evidence>
<evidence type="ECO:0000255" key="2">
    <source>
        <dbReference type="PROSITE-ProRule" id="PRU00613"/>
    </source>
</evidence>
<evidence type="ECO:0000255" key="3">
    <source>
        <dbReference type="PROSITE-ProRule" id="PRU01035"/>
    </source>
</evidence>
<evidence type="ECO:0000255" key="4">
    <source>
        <dbReference type="PROSITE-ProRule" id="PRU10092"/>
    </source>
</evidence>
<evidence type="ECO:0000255" key="5">
    <source>
        <dbReference type="PROSITE-ProRule" id="PRU10093"/>
    </source>
</evidence>
<evidence type="ECO:0000256" key="6">
    <source>
        <dbReference type="SAM" id="MobiDB-lite"/>
    </source>
</evidence>
<evidence type="ECO:0000269" key="7">
    <source>
    </source>
</evidence>
<evidence type="ECO:0000269" key="8">
    <source>
    </source>
</evidence>
<evidence type="ECO:0000303" key="9">
    <source>
    </source>
</evidence>
<evidence type="ECO:0000303" key="10">
    <source>
    </source>
</evidence>
<evidence type="ECO:0000303" key="11">
    <source>
    </source>
</evidence>
<evidence type="ECO:0000305" key="12"/>
<evidence type="ECO:0000312" key="13">
    <source>
        <dbReference type="EMBL" id="AAL77418.1"/>
    </source>
</evidence>
<evidence type="ECO:0007744" key="14">
    <source>
    </source>
</evidence>
<evidence type="ECO:0007744" key="15">
    <source>
    </source>
</evidence>
<proteinExistence type="evidence at protein level"/>
<gene>
    <name type="primary">Usp15</name>
    <name type="synonym">Kiaa0529</name>
</gene>
<keyword id="KW-0007">Acetylation</keyword>
<keyword id="KW-0025">Alternative splicing</keyword>
<keyword id="KW-0963">Cytoplasm</keyword>
<keyword id="KW-0378">Hydrolase</keyword>
<keyword id="KW-0496">Mitochondrion</keyword>
<keyword id="KW-0539">Nucleus</keyword>
<keyword id="KW-0597">Phosphoprotein</keyword>
<keyword id="KW-0645">Protease</keyword>
<keyword id="KW-1185">Reference proteome</keyword>
<keyword id="KW-0788">Thiol protease</keyword>
<keyword id="KW-0832">Ubl conjugation</keyword>
<keyword id="KW-0833">Ubl conjugation pathway</keyword>
<accession>Q8R5H1</accession>
<accession>Q3TGF5</accession>
<accession>Q3TTB2</accession>
<accession>Q3UL25</accession>
<accession>Q3UZH0</accession>
<accession>Q80TY6</accession>
<accession>Q80UK9</accession>
<organism evidence="13">
    <name type="scientific">Mus musculus</name>
    <name type="common">Mouse</name>
    <dbReference type="NCBI Taxonomy" id="10090"/>
    <lineage>
        <taxon>Eukaryota</taxon>
        <taxon>Metazoa</taxon>
        <taxon>Chordata</taxon>
        <taxon>Craniata</taxon>
        <taxon>Vertebrata</taxon>
        <taxon>Euteleostomi</taxon>
        <taxon>Mammalia</taxon>
        <taxon>Eutheria</taxon>
        <taxon>Euarchontoglires</taxon>
        <taxon>Glires</taxon>
        <taxon>Rodentia</taxon>
        <taxon>Myomorpha</taxon>
        <taxon>Muroidea</taxon>
        <taxon>Muridae</taxon>
        <taxon>Murinae</taxon>
        <taxon>Mus</taxon>
        <taxon>Mus</taxon>
    </lineage>
</organism>
<feature type="initiator methionine" description="Removed" evidence="1">
    <location>
        <position position="1"/>
    </location>
</feature>
<feature type="chain" id="PRO_0000080642" description="Ubiquitin carboxyl-terminal hydrolase 15">
    <location>
        <begin position="2"/>
        <end position="981"/>
    </location>
</feature>
<feature type="domain" description="DUSP" evidence="2">
    <location>
        <begin position="7"/>
        <end position="118"/>
    </location>
</feature>
<feature type="domain" description="USP" evidence="3">
    <location>
        <begin position="289"/>
        <end position="933"/>
    </location>
</feature>
<feature type="region of interest" description="Mediates interaction with SART3" evidence="1">
    <location>
        <begin position="2"/>
        <end position="223"/>
    </location>
</feature>
<feature type="region of interest" description="Disordered" evidence="6">
    <location>
        <begin position="216"/>
        <end position="237"/>
    </location>
</feature>
<feature type="region of interest" description="Disordered" evidence="6">
    <location>
        <begin position="633"/>
        <end position="694"/>
    </location>
</feature>
<feature type="region of interest" description="Disordered" evidence="6">
    <location>
        <begin position="952"/>
        <end position="981"/>
    </location>
</feature>
<feature type="compositionally biased region" description="Polar residues" evidence="6">
    <location>
        <begin position="226"/>
        <end position="237"/>
    </location>
</feature>
<feature type="compositionally biased region" description="Acidic residues" evidence="6">
    <location>
        <begin position="656"/>
        <end position="673"/>
    </location>
</feature>
<feature type="compositionally biased region" description="Acidic residues" evidence="6">
    <location>
        <begin position="960"/>
        <end position="974"/>
    </location>
</feature>
<feature type="active site" description="Nucleophile" evidence="4 5">
    <location>
        <position position="298"/>
    </location>
</feature>
<feature type="active site" description="Proton acceptor" evidence="4 5">
    <location>
        <position position="891"/>
    </location>
</feature>
<feature type="modified residue" description="N-acetylalanine" evidence="1">
    <location>
        <position position="2"/>
    </location>
</feature>
<feature type="modified residue" description="Phosphothreonine" evidence="1">
    <location>
        <position position="226"/>
    </location>
</feature>
<feature type="modified residue" description="Phosphoserine" evidence="14 15">
    <location>
        <position position="229"/>
    </location>
</feature>
<feature type="modified residue" description="Phosphoserine" evidence="1">
    <location>
        <position position="242"/>
    </location>
</feature>
<feature type="modified residue" description="Phosphothreonine" evidence="15">
    <location>
        <position position="602"/>
    </location>
</feature>
<feature type="modified residue" description="Phosphoserine" evidence="15">
    <location>
        <position position="961"/>
    </location>
</feature>
<feature type="modified residue" description="Phosphoserine" evidence="15">
    <location>
        <position position="965"/>
    </location>
</feature>
<feature type="splice variant" id="VSP_005262" description="In isoform 2." evidence="9">
    <original>TLLKTSLR</original>
    <variation>DAWLKPRSG</variation>
    <location>
        <begin position="18"/>
        <end position="25"/>
    </location>
</feature>
<feature type="splice variant" id="VSP_005265" description="In isoform 4." evidence="11">
    <original>LVIEQKNEDGTWPRGPSTP</original>
    <variation>PRCIQFFNFTKDLSFISIK</variation>
    <location>
        <begin position="209"/>
        <end position="227"/>
    </location>
</feature>
<feature type="splice variant" id="VSP_005266" description="In isoform 4." evidence="11">
    <location>
        <begin position="228"/>
        <end position="981"/>
    </location>
</feature>
<feature type="splice variant" id="VSP_005263" description="In isoform 2 and isoform 5." evidence="9 10 11">
    <location>
        <begin position="228"/>
        <end position="256"/>
    </location>
</feature>
<feature type="splice variant" id="VSP_005264" description="In isoform 3." evidence="11">
    <location>
        <begin position="229"/>
        <end position="981"/>
    </location>
</feature>
<feature type="sequence conflict" description="In Ref. 3; BAE40593." evidence="12" ref="3">
    <original>E</original>
    <variation>G</variation>
    <location>
        <position position="130"/>
    </location>
</feature>
<feature type="sequence conflict" description="In Ref. 3; BAE36413." evidence="12" ref="3">
    <original>I</original>
    <variation>M</variation>
    <location>
        <position position="158"/>
    </location>
</feature>
<feature type="sequence conflict" description="In Ref. 5; AAH50042." evidence="12" ref="5">
    <original>M</original>
    <variation>V</variation>
    <location>
        <position position="184"/>
    </location>
</feature>
<feature type="sequence conflict" description="In Ref. 5; AAH50042." evidence="12" ref="5">
    <original>D</original>
    <variation>G</variation>
    <location>
        <position position="662"/>
    </location>
</feature>
<feature type="sequence conflict" description="In Ref. 5; AAH50042." evidence="12" ref="5">
    <original>K</original>
    <variation>E</variation>
    <location>
        <position position="800"/>
    </location>
</feature>
<dbReference type="EC" id="3.4.19.12" evidence="1"/>
<dbReference type="EMBL" id="AF468037">
    <property type="protein sequence ID" value="AAL77418.1"/>
    <property type="molecule type" value="mRNA"/>
</dbReference>
<dbReference type="EMBL" id="AK046332">
    <property type="protein sequence ID" value="BAC32683.1"/>
    <property type="molecule type" value="mRNA"/>
</dbReference>
<dbReference type="EMBL" id="AK083303">
    <property type="protein sequence ID" value="BAC38854.1"/>
    <property type="molecule type" value="mRNA"/>
</dbReference>
<dbReference type="EMBL" id="AK133852">
    <property type="protein sequence ID" value="BAE21887.1"/>
    <property type="molecule type" value="mRNA"/>
</dbReference>
<dbReference type="EMBL" id="AK145749">
    <property type="protein sequence ID" value="BAE26626.1"/>
    <property type="molecule type" value="mRNA"/>
</dbReference>
<dbReference type="EMBL" id="AK161469">
    <property type="protein sequence ID" value="BAE36413.1"/>
    <property type="molecule type" value="mRNA"/>
</dbReference>
<dbReference type="EMBL" id="AK168755">
    <property type="protein sequence ID" value="BAE40593.1"/>
    <property type="molecule type" value="mRNA"/>
</dbReference>
<dbReference type="EMBL" id="AK122301">
    <property type="protein sequence ID" value="BAC65583.1"/>
    <property type="status" value="ALT_INIT"/>
    <property type="molecule type" value="mRNA"/>
</dbReference>
<dbReference type="EMBL" id="CH466578">
    <property type="protein sequence ID" value="EDL24441.1"/>
    <property type="status" value="ALT_INIT"/>
    <property type="molecule type" value="Genomic_DNA"/>
</dbReference>
<dbReference type="EMBL" id="BC050042">
    <property type="protein sequence ID" value="AAH50042.1"/>
    <property type="molecule type" value="mRNA"/>
</dbReference>
<dbReference type="CCDS" id="CCDS24217.1">
    <molecule id="Q8R5H1-1"/>
</dbReference>
<dbReference type="CCDS" id="CCDS88095.1">
    <molecule id="Q8R5H1-5"/>
</dbReference>
<dbReference type="RefSeq" id="NP_001288557.1">
    <molecule id="Q8R5H1-5"/>
    <property type="nucleotide sequence ID" value="NM_001301628.2"/>
</dbReference>
<dbReference type="RefSeq" id="NP_081880.2">
    <molecule id="Q8R5H1-1"/>
    <property type="nucleotide sequence ID" value="NM_027604.4"/>
</dbReference>
<dbReference type="BMRB" id="Q8R5H1"/>
<dbReference type="SMR" id="Q8R5H1"/>
<dbReference type="BioGRID" id="199854">
    <property type="interactions" value="98"/>
</dbReference>
<dbReference type="FunCoup" id="Q8R5H1">
    <property type="interactions" value="4255"/>
</dbReference>
<dbReference type="IntAct" id="Q8R5H1">
    <property type="interactions" value="3"/>
</dbReference>
<dbReference type="MINT" id="Q8R5H1"/>
<dbReference type="STRING" id="10090.ENSMUSP00000151244"/>
<dbReference type="MEROPS" id="C19.022"/>
<dbReference type="GlyGen" id="Q8R5H1">
    <property type="glycosylation" value="3 sites, 1 N-linked glycan (1 site), 1 O-linked glycan (1 site)"/>
</dbReference>
<dbReference type="iPTMnet" id="Q8R5H1"/>
<dbReference type="PhosphoSitePlus" id="Q8R5H1"/>
<dbReference type="SwissPalm" id="Q8R5H1"/>
<dbReference type="jPOST" id="Q8R5H1"/>
<dbReference type="PaxDb" id="10090-ENSMUSP00000020334"/>
<dbReference type="PeptideAtlas" id="Q8R5H1"/>
<dbReference type="ProteomicsDB" id="298091">
    <molecule id="Q8R5H1-1"/>
</dbReference>
<dbReference type="ProteomicsDB" id="298092">
    <molecule id="Q8R5H1-2"/>
</dbReference>
<dbReference type="ProteomicsDB" id="298093">
    <molecule id="Q8R5H1-3"/>
</dbReference>
<dbReference type="ProteomicsDB" id="298094">
    <molecule id="Q8R5H1-4"/>
</dbReference>
<dbReference type="ProteomicsDB" id="298095">
    <molecule id="Q8R5H1-5"/>
</dbReference>
<dbReference type="Pumba" id="Q8R5H1"/>
<dbReference type="Antibodypedia" id="1729">
    <property type="antibodies" value="334 antibodies from 37 providers"/>
</dbReference>
<dbReference type="DNASU" id="14479"/>
<dbReference type="Ensembl" id="ENSMUST00000020334.9">
    <molecule id="Q8R5H1-5"/>
    <property type="protein sequence ID" value="ENSMUSP00000020334.9"/>
    <property type="gene ID" value="ENSMUSG00000020124.11"/>
</dbReference>
<dbReference type="Ensembl" id="ENSMUST00000220377.2">
    <molecule id="Q8R5H1-1"/>
    <property type="protein sequence ID" value="ENSMUSP00000151244.2"/>
    <property type="gene ID" value="ENSMUSG00000020124.11"/>
</dbReference>
<dbReference type="GeneID" id="14479"/>
<dbReference type="KEGG" id="mmu:14479"/>
<dbReference type="UCSC" id="uc007hgn.2">
    <molecule id="Q8R5H1-1"/>
    <property type="organism name" value="mouse"/>
</dbReference>
<dbReference type="UCSC" id="uc007hgo.2">
    <molecule id="Q8R5H1-5"/>
    <property type="organism name" value="mouse"/>
</dbReference>
<dbReference type="UCSC" id="uc007hgt.2">
    <molecule id="Q8R5H1-3"/>
    <property type="organism name" value="mouse"/>
</dbReference>
<dbReference type="UCSC" id="uc011xpf.2">
    <molecule id="Q8R5H1-4"/>
    <property type="organism name" value="mouse"/>
</dbReference>
<dbReference type="AGR" id="MGI:101857"/>
<dbReference type="CTD" id="9958"/>
<dbReference type="MGI" id="MGI:101857">
    <property type="gene designation" value="Usp15"/>
</dbReference>
<dbReference type="VEuPathDB" id="HostDB:ENSMUSG00000020124"/>
<dbReference type="eggNOG" id="KOG1870">
    <property type="taxonomic scope" value="Eukaryota"/>
</dbReference>
<dbReference type="GeneTree" id="ENSGT00940000154932"/>
<dbReference type="HOGENOM" id="CLU_001060_7_1_1"/>
<dbReference type="InParanoid" id="Q8R5H1"/>
<dbReference type="OMA" id="PCHAQQS"/>
<dbReference type="OrthoDB" id="265776at2759"/>
<dbReference type="PhylomeDB" id="Q8R5H1"/>
<dbReference type="TreeFam" id="TF106276"/>
<dbReference type="Reactome" id="R-MMU-5689880">
    <property type="pathway name" value="Ub-specific processing proteases"/>
</dbReference>
<dbReference type="BioGRID-ORCS" id="14479">
    <property type="hits" value="7 hits in 78 CRISPR screens"/>
</dbReference>
<dbReference type="ChiTaRS" id="Usp15">
    <property type="organism name" value="mouse"/>
</dbReference>
<dbReference type="PRO" id="PR:Q8R5H1"/>
<dbReference type="Proteomes" id="UP000000589">
    <property type="component" value="Chromosome 10"/>
</dbReference>
<dbReference type="RNAct" id="Q8R5H1">
    <property type="molecule type" value="protein"/>
</dbReference>
<dbReference type="Bgee" id="ENSMUSG00000020124">
    <property type="expression patterns" value="Expressed in spermatid and 275 other cell types or tissues"/>
</dbReference>
<dbReference type="ExpressionAtlas" id="Q8R5H1">
    <property type="expression patterns" value="baseline and differential"/>
</dbReference>
<dbReference type="GO" id="GO:0005737">
    <property type="term" value="C:cytoplasm"/>
    <property type="evidence" value="ECO:0000250"/>
    <property type="project" value="UniProtKB"/>
</dbReference>
<dbReference type="GO" id="GO:0005829">
    <property type="term" value="C:cytosol"/>
    <property type="evidence" value="ECO:0007669"/>
    <property type="project" value="Ensembl"/>
</dbReference>
<dbReference type="GO" id="GO:0005739">
    <property type="term" value="C:mitochondrion"/>
    <property type="evidence" value="ECO:0007669"/>
    <property type="project" value="UniProtKB-SubCell"/>
</dbReference>
<dbReference type="GO" id="GO:0016604">
    <property type="term" value="C:nuclear body"/>
    <property type="evidence" value="ECO:0007669"/>
    <property type="project" value="Ensembl"/>
</dbReference>
<dbReference type="GO" id="GO:0005634">
    <property type="term" value="C:nucleus"/>
    <property type="evidence" value="ECO:0000250"/>
    <property type="project" value="UniProtKB"/>
</dbReference>
<dbReference type="GO" id="GO:0004843">
    <property type="term" value="F:cysteine-type deubiquitinase activity"/>
    <property type="evidence" value="ECO:0000314"/>
    <property type="project" value="MGI"/>
</dbReference>
<dbReference type="GO" id="GO:0004197">
    <property type="term" value="F:cysteine-type endopeptidase activity"/>
    <property type="evidence" value="ECO:0000250"/>
    <property type="project" value="UniProtKB"/>
</dbReference>
<dbReference type="GO" id="GO:0101005">
    <property type="term" value="F:deubiquitinase activity"/>
    <property type="evidence" value="ECO:0000315"/>
    <property type="project" value="MGI"/>
</dbReference>
<dbReference type="GO" id="GO:0042802">
    <property type="term" value="F:identical protein binding"/>
    <property type="evidence" value="ECO:0007669"/>
    <property type="project" value="Ensembl"/>
</dbReference>
<dbReference type="GO" id="GO:1990380">
    <property type="term" value="F:K48-linked deubiquitinase activity"/>
    <property type="evidence" value="ECO:0007669"/>
    <property type="project" value="Ensembl"/>
</dbReference>
<dbReference type="GO" id="GO:0046332">
    <property type="term" value="F:SMAD binding"/>
    <property type="evidence" value="ECO:0007669"/>
    <property type="project" value="Ensembl"/>
</dbReference>
<dbReference type="GO" id="GO:0005160">
    <property type="term" value="F:transforming growth factor beta receptor binding"/>
    <property type="evidence" value="ECO:0007669"/>
    <property type="project" value="Ensembl"/>
</dbReference>
<dbReference type="GO" id="GO:0061649">
    <property type="term" value="F:ubiquitin-modified histone reader activity"/>
    <property type="evidence" value="ECO:0007669"/>
    <property type="project" value="Ensembl"/>
</dbReference>
<dbReference type="GO" id="GO:0030509">
    <property type="term" value="P:BMP signaling pathway"/>
    <property type="evidence" value="ECO:0000250"/>
    <property type="project" value="UniProtKB"/>
</dbReference>
<dbReference type="GO" id="GO:0035520">
    <property type="term" value="P:monoubiquitinated protein deubiquitination"/>
    <property type="evidence" value="ECO:0000250"/>
    <property type="project" value="UniProtKB"/>
</dbReference>
<dbReference type="GO" id="GO:1905035">
    <property type="term" value="P:negative regulation of antifungal innate immune response"/>
    <property type="evidence" value="ECO:0000250"/>
    <property type="project" value="UniProtKB"/>
</dbReference>
<dbReference type="GO" id="GO:0030512">
    <property type="term" value="P:negative regulation of transforming growth factor beta receptor signaling pathway"/>
    <property type="evidence" value="ECO:0000250"/>
    <property type="project" value="UniProtKB"/>
</dbReference>
<dbReference type="GO" id="GO:1900246">
    <property type="term" value="P:positive regulation of RIG-I signaling pathway"/>
    <property type="evidence" value="ECO:0007669"/>
    <property type="project" value="Ensembl"/>
</dbReference>
<dbReference type="GO" id="GO:0016579">
    <property type="term" value="P:protein deubiquitination"/>
    <property type="evidence" value="ECO:0000315"/>
    <property type="project" value="MGI"/>
</dbReference>
<dbReference type="GO" id="GO:1990167">
    <property type="term" value="P:protein K27-linked deubiquitination"/>
    <property type="evidence" value="ECO:0000250"/>
    <property type="project" value="UniProtKB"/>
</dbReference>
<dbReference type="GO" id="GO:0006508">
    <property type="term" value="P:proteolysis"/>
    <property type="evidence" value="ECO:0007669"/>
    <property type="project" value="UniProtKB-KW"/>
</dbReference>
<dbReference type="GO" id="GO:1902238">
    <property type="term" value="P:regulation of intrinsic apoptotic signaling pathway in response to osmotic stress by p53 class mediator"/>
    <property type="evidence" value="ECO:0000315"/>
    <property type="project" value="MGI"/>
</dbReference>
<dbReference type="GO" id="GO:0051252">
    <property type="term" value="P:regulation of RNA metabolic process"/>
    <property type="evidence" value="ECO:0007669"/>
    <property type="project" value="Ensembl"/>
</dbReference>
<dbReference type="GO" id="GO:0140673">
    <property type="term" value="P:transcription elongation-coupled chromatin remodeling"/>
    <property type="evidence" value="ECO:0000250"/>
    <property type="project" value="UniProtKB"/>
</dbReference>
<dbReference type="GO" id="GO:0007179">
    <property type="term" value="P:transforming growth factor beta receptor signaling pathway"/>
    <property type="evidence" value="ECO:0007669"/>
    <property type="project" value="Ensembl"/>
</dbReference>
<dbReference type="CDD" id="cd02674">
    <property type="entry name" value="Peptidase_C19R"/>
    <property type="match status" value="1"/>
</dbReference>
<dbReference type="FunFam" id="3.30.2230.10:FF:000003">
    <property type="entry name" value="ubiquitin carboxyl-terminal hydrolase 15 isoform X1"/>
    <property type="match status" value="1"/>
</dbReference>
<dbReference type="FunFam" id="3.90.70.10:FF:000013">
    <property type="entry name" value="ubiquitin carboxyl-terminal hydrolase 15 isoform X1"/>
    <property type="match status" value="1"/>
</dbReference>
<dbReference type="FunFam" id="3.90.70.10:FF:000034">
    <property type="entry name" value="ubiquitin carboxyl-terminal hydrolase 15 isoform X1"/>
    <property type="match status" value="1"/>
</dbReference>
<dbReference type="FunFam" id="3.10.20.90:FF:000020">
    <property type="entry name" value="ubiquitin carboxyl-terminal hydrolase 15 isoform X2"/>
    <property type="match status" value="1"/>
</dbReference>
<dbReference type="Gene3D" id="3.90.70.10">
    <property type="entry name" value="Cysteine proteinases"/>
    <property type="match status" value="2"/>
</dbReference>
<dbReference type="Gene3D" id="3.30.2230.10">
    <property type="entry name" value="DUSP-like"/>
    <property type="match status" value="1"/>
</dbReference>
<dbReference type="Gene3D" id="3.10.20.90">
    <property type="entry name" value="Phosphatidylinositol 3-kinase Catalytic Subunit, Chain A, domain 1"/>
    <property type="match status" value="1"/>
</dbReference>
<dbReference type="InterPro" id="IPR035927">
    <property type="entry name" value="DUSP-like_sf"/>
</dbReference>
<dbReference type="InterPro" id="IPR038765">
    <property type="entry name" value="Papain-like_cys_pep_sf"/>
</dbReference>
<dbReference type="InterPro" id="IPR006615">
    <property type="entry name" value="Pept_C19_DUSP"/>
</dbReference>
<dbReference type="InterPro" id="IPR001394">
    <property type="entry name" value="Peptidase_C19_UCH"/>
</dbReference>
<dbReference type="InterPro" id="IPR013792">
    <property type="entry name" value="RNA3'P_cycl/enolpyr_Trfase_a/b"/>
</dbReference>
<dbReference type="InterPro" id="IPR050185">
    <property type="entry name" value="Ub_carboxyl-term_hydrolase"/>
</dbReference>
<dbReference type="InterPro" id="IPR028135">
    <property type="entry name" value="Ub_USP-typ"/>
</dbReference>
<dbReference type="InterPro" id="IPR029071">
    <property type="entry name" value="Ubiquitin-like_domsf"/>
</dbReference>
<dbReference type="InterPro" id="IPR029346">
    <property type="entry name" value="USP_C"/>
</dbReference>
<dbReference type="InterPro" id="IPR018200">
    <property type="entry name" value="USP_CS"/>
</dbReference>
<dbReference type="InterPro" id="IPR028889">
    <property type="entry name" value="USP_dom"/>
</dbReference>
<dbReference type="PANTHER" id="PTHR21646">
    <property type="entry name" value="UBIQUITIN CARBOXYL-TERMINAL HYDROLASE"/>
    <property type="match status" value="1"/>
</dbReference>
<dbReference type="PANTHER" id="PTHR21646:SF28">
    <property type="entry name" value="UBIQUITIN CARBOXYL-TERMINAL HYDROLASE 15"/>
    <property type="match status" value="1"/>
</dbReference>
<dbReference type="Pfam" id="PF06337">
    <property type="entry name" value="DUSP"/>
    <property type="match status" value="1"/>
</dbReference>
<dbReference type="Pfam" id="PF14836">
    <property type="entry name" value="Ubiquitin_3"/>
    <property type="match status" value="1"/>
</dbReference>
<dbReference type="Pfam" id="PF00443">
    <property type="entry name" value="UCH"/>
    <property type="match status" value="1"/>
</dbReference>
<dbReference type="Pfam" id="PF14533">
    <property type="entry name" value="USP7_C2"/>
    <property type="match status" value="1"/>
</dbReference>
<dbReference type="SMART" id="SM00695">
    <property type="entry name" value="DUSP"/>
    <property type="match status" value="1"/>
</dbReference>
<dbReference type="SUPFAM" id="SSF54001">
    <property type="entry name" value="Cysteine proteinases"/>
    <property type="match status" value="1"/>
</dbReference>
<dbReference type="SUPFAM" id="SSF143791">
    <property type="entry name" value="DUSP-like"/>
    <property type="match status" value="1"/>
</dbReference>
<dbReference type="SUPFAM" id="SSF55205">
    <property type="entry name" value="EPT/RTPC-like"/>
    <property type="match status" value="1"/>
</dbReference>
<dbReference type="SUPFAM" id="SSF54236">
    <property type="entry name" value="Ubiquitin-like"/>
    <property type="match status" value="1"/>
</dbReference>
<dbReference type="PROSITE" id="PS51283">
    <property type="entry name" value="DUSP"/>
    <property type="match status" value="1"/>
</dbReference>
<dbReference type="PROSITE" id="PS00972">
    <property type="entry name" value="USP_1"/>
    <property type="match status" value="1"/>
</dbReference>
<dbReference type="PROSITE" id="PS00973">
    <property type="entry name" value="USP_2"/>
    <property type="match status" value="1"/>
</dbReference>
<dbReference type="PROSITE" id="PS50235">
    <property type="entry name" value="USP_3"/>
    <property type="match status" value="1"/>
</dbReference>
<sequence length="981" mass="112325">MAEGGAADLDTQRSDIATLLKTSLRKGDTWYLVDSRWFKQWKKYVGFDSWDKYQMGDQNVYPGPIDNSGLLKDGDAQSLKEHLIDELDYILLPTEGWNKLVSWYTLMEGQEPIARKVVEQGMFVKHCKVEVYLTELKLCENGNMNNVVTRRFSKADTIDTIEKEIRKIFNIPDEKEARLWNKYMSNTFEPLNKPDSTIQDAGLYQGQVLVIEQKNEDGTWPRGPSTPKSPGASNFSTLPKISPSSLSNNYNNINNRNVKNSNYCLPSYTAYKNYDYSEPGRNNEQPGLCGLSNLGNTCFMNSAIQCLSNTPPLTEYFLNDKYQEELNFDNPLGMRGEIAKSYAELIKQMWSGKFSYVTPRAFKTQVGRFAPQFSGYQQQDCQELLAFLLDGLHEDLNRIRKKPYIQLKDADGRPDKVVAEEAWENHLKRNDSIIVDIFHGLFKSTLVCPECAKISVTFDPFCYLTLPLPMKKERSLEVYLVRMDPLAKPMQYKVIVPKIGNILDLCTALSALSGVPADKMIVTDIYNHRFHRIFAVDENLSSIMERDDIYVFEININRAEDTEHVVIPVCLREKFRHSSYTHHTGSSLFGQPFLMAIPRNNTEDKLYNLLLLRMCRYVKMSTETEETDGHLRCCEDQNINGNGPNGLHEEGSPSEMETDEPDDESSQDQELPSENENSQSEDSVGGDNDSENGLCTEETCKGQLTGHKKRLFTFQFNNLGNNDINYIKDDTSHIRFDDRQLRLDERSFLALDWDPDLKKRYFDENAAEDFEKHESVEYKPPKRPFVKLKDCIELFTTKEKLGAEDPWYCPNCKEHQQATKKLDLWSLPPVLVVHLKRFSYSRYMRDKLDTLVDFPISDLDMSEFLINPNAGPCRYNLIAVSNHYGGMGGGHYTAFAKNKDDGKWYYFDDSSVSTASEDQIVSKAAYVLFYQRQDTFSGTGFFPLDRETKGASAATGIPLESDEDSNDNDNDLENENCMHTN</sequence>
<protein>
    <recommendedName>
        <fullName>Ubiquitin carboxyl-terminal hydrolase 15</fullName>
        <ecNumber evidence="1">3.4.19.12</ecNumber>
    </recommendedName>
    <alternativeName>
        <fullName>Deubiquitinating enzyme 15</fullName>
    </alternativeName>
    <alternativeName>
        <fullName>Ubiquitin thioesterase 15</fullName>
    </alternativeName>
    <alternativeName>
        <fullName>Ubiquitin-specific-processing protease 15</fullName>
    </alternativeName>
</protein>
<name>UBP15_MOUSE</name>
<reference evidence="12" key="1">
    <citation type="journal article" date="2003" name="Mamm. Genome">
        <title>Isolation and characterization of the mouse ubiquitin-specific protease Usp15.</title>
        <authorList>
            <person name="Angelats C."/>
            <person name="Wang X.-W."/>
            <person name="Jermiin L.S."/>
            <person name="Copeland N.G."/>
            <person name="Jenkins N.A."/>
            <person name="Baker R.T."/>
        </authorList>
    </citation>
    <scope>NUCLEOTIDE SEQUENCE [MRNA] (ISOFORMS 1 AND 2)</scope>
    <scope>TISSUE SPECIFICITY</scope>
    <source>
        <strain>C57BL/6J</strain>
    </source>
</reference>
<reference key="2">
    <citation type="journal article" date="2003" name="DNA Res.">
        <title>Prediction of the coding sequences of mouse homologues of KIAA gene: II. The complete nucleotide sequences of 400 mouse KIAA-homologous cDNAs identified by screening of terminal sequences of cDNA clones randomly sampled from size-fractionated libraries.</title>
        <authorList>
            <person name="Okazaki N."/>
            <person name="Kikuno R."/>
            <person name="Ohara R."/>
            <person name="Inamoto S."/>
            <person name="Aizawa H."/>
            <person name="Yuasa S."/>
            <person name="Nakajima D."/>
            <person name="Nagase T."/>
            <person name="Ohara O."/>
            <person name="Koga H."/>
        </authorList>
    </citation>
    <scope>NUCLEOTIDE SEQUENCE [LARGE SCALE MRNA] (ISOFORM 5)</scope>
    <source>
        <tissue>Brain</tissue>
    </source>
</reference>
<reference key="3">
    <citation type="journal article" date="2005" name="Science">
        <title>The transcriptional landscape of the mammalian genome.</title>
        <authorList>
            <person name="Carninci P."/>
            <person name="Kasukawa T."/>
            <person name="Katayama S."/>
            <person name="Gough J."/>
            <person name="Frith M.C."/>
            <person name="Maeda N."/>
            <person name="Oyama R."/>
            <person name="Ravasi T."/>
            <person name="Lenhard B."/>
            <person name="Wells C."/>
            <person name="Kodzius R."/>
            <person name="Shimokawa K."/>
            <person name="Bajic V.B."/>
            <person name="Brenner S.E."/>
            <person name="Batalov S."/>
            <person name="Forrest A.R."/>
            <person name="Zavolan M."/>
            <person name="Davis M.J."/>
            <person name="Wilming L.G."/>
            <person name="Aidinis V."/>
            <person name="Allen J.E."/>
            <person name="Ambesi-Impiombato A."/>
            <person name="Apweiler R."/>
            <person name="Aturaliya R.N."/>
            <person name="Bailey T.L."/>
            <person name="Bansal M."/>
            <person name="Baxter L."/>
            <person name="Beisel K.W."/>
            <person name="Bersano T."/>
            <person name="Bono H."/>
            <person name="Chalk A.M."/>
            <person name="Chiu K.P."/>
            <person name="Choudhary V."/>
            <person name="Christoffels A."/>
            <person name="Clutterbuck D.R."/>
            <person name="Crowe M.L."/>
            <person name="Dalla E."/>
            <person name="Dalrymple B.P."/>
            <person name="de Bono B."/>
            <person name="Della Gatta G."/>
            <person name="di Bernardo D."/>
            <person name="Down T."/>
            <person name="Engstrom P."/>
            <person name="Fagiolini M."/>
            <person name="Faulkner G."/>
            <person name="Fletcher C.F."/>
            <person name="Fukushima T."/>
            <person name="Furuno M."/>
            <person name="Futaki S."/>
            <person name="Gariboldi M."/>
            <person name="Georgii-Hemming P."/>
            <person name="Gingeras T.R."/>
            <person name="Gojobori T."/>
            <person name="Green R.E."/>
            <person name="Gustincich S."/>
            <person name="Harbers M."/>
            <person name="Hayashi Y."/>
            <person name="Hensch T.K."/>
            <person name="Hirokawa N."/>
            <person name="Hill D."/>
            <person name="Huminiecki L."/>
            <person name="Iacono M."/>
            <person name="Ikeo K."/>
            <person name="Iwama A."/>
            <person name="Ishikawa T."/>
            <person name="Jakt M."/>
            <person name="Kanapin A."/>
            <person name="Katoh M."/>
            <person name="Kawasawa Y."/>
            <person name="Kelso J."/>
            <person name="Kitamura H."/>
            <person name="Kitano H."/>
            <person name="Kollias G."/>
            <person name="Krishnan S.P."/>
            <person name="Kruger A."/>
            <person name="Kummerfeld S.K."/>
            <person name="Kurochkin I.V."/>
            <person name="Lareau L.F."/>
            <person name="Lazarevic D."/>
            <person name="Lipovich L."/>
            <person name="Liu J."/>
            <person name="Liuni S."/>
            <person name="McWilliam S."/>
            <person name="Madan Babu M."/>
            <person name="Madera M."/>
            <person name="Marchionni L."/>
            <person name="Matsuda H."/>
            <person name="Matsuzawa S."/>
            <person name="Miki H."/>
            <person name="Mignone F."/>
            <person name="Miyake S."/>
            <person name="Morris K."/>
            <person name="Mottagui-Tabar S."/>
            <person name="Mulder N."/>
            <person name="Nakano N."/>
            <person name="Nakauchi H."/>
            <person name="Ng P."/>
            <person name="Nilsson R."/>
            <person name="Nishiguchi S."/>
            <person name="Nishikawa S."/>
            <person name="Nori F."/>
            <person name="Ohara O."/>
            <person name="Okazaki Y."/>
            <person name="Orlando V."/>
            <person name="Pang K.C."/>
            <person name="Pavan W.J."/>
            <person name="Pavesi G."/>
            <person name="Pesole G."/>
            <person name="Petrovsky N."/>
            <person name="Piazza S."/>
            <person name="Reed J."/>
            <person name="Reid J.F."/>
            <person name="Ring B.Z."/>
            <person name="Ringwald M."/>
            <person name="Rost B."/>
            <person name="Ruan Y."/>
            <person name="Salzberg S.L."/>
            <person name="Sandelin A."/>
            <person name="Schneider C."/>
            <person name="Schoenbach C."/>
            <person name="Sekiguchi K."/>
            <person name="Semple C.A."/>
            <person name="Seno S."/>
            <person name="Sessa L."/>
            <person name="Sheng Y."/>
            <person name="Shibata Y."/>
            <person name="Shimada H."/>
            <person name="Shimada K."/>
            <person name="Silva D."/>
            <person name="Sinclair B."/>
            <person name="Sperling S."/>
            <person name="Stupka E."/>
            <person name="Sugiura K."/>
            <person name="Sultana R."/>
            <person name="Takenaka Y."/>
            <person name="Taki K."/>
            <person name="Tammoja K."/>
            <person name="Tan S.L."/>
            <person name="Tang S."/>
            <person name="Taylor M.S."/>
            <person name="Tegner J."/>
            <person name="Teichmann S.A."/>
            <person name="Ueda H.R."/>
            <person name="van Nimwegen E."/>
            <person name="Verardo R."/>
            <person name="Wei C.L."/>
            <person name="Yagi K."/>
            <person name="Yamanishi H."/>
            <person name="Zabarovsky E."/>
            <person name="Zhu S."/>
            <person name="Zimmer A."/>
            <person name="Hide W."/>
            <person name="Bult C."/>
            <person name="Grimmond S.M."/>
            <person name="Teasdale R.D."/>
            <person name="Liu E.T."/>
            <person name="Brusic V."/>
            <person name="Quackenbush J."/>
            <person name="Wahlestedt C."/>
            <person name="Mattick J.S."/>
            <person name="Hume D.A."/>
            <person name="Kai C."/>
            <person name="Sasaki D."/>
            <person name="Tomaru Y."/>
            <person name="Fukuda S."/>
            <person name="Kanamori-Katayama M."/>
            <person name="Suzuki M."/>
            <person name="Aoki J."/>
            <person name="Arakawa T."/>
            <person name="Iida J."/>
            <person name="Imamura K."/>
            <person name="Itoh M."/>
            <person name="Kato T."/>
            <person name="Kawaji H."/>
            <person name="Kawagashira N."/>
            <person name="Kawashima T."/>
            <person name="Kojima M."/>
            <person name="Kondo S."/>
            <person name="Konno H."/>
            <person name="Nakano K."/>
            <person name="Ninomiya N."/>
            <person name="Nishio T."/>
            <person name="Okada M."/>
            <person name="Plessy C."/>
            <person name="Shibata K."/>
            <person name="Shiraki T."/>
            <person name="Suzuki S."/>
            <person name="Tagami M."/>
            <person name="Waki K."/>
            <person name="Watahiki A."/>
            <person name="Okamura-Oho Y."/>
            <person name="Suzuki H."/>
            <person name="Kawai J."/>
            <person name="Hayashizaki Y."/>
        </authorList>
    </citation>
    <scope>NUCLEOTIDE SEQUENCE [LARGE SCALE MRNA] (ISOFORMS 1; 3; 4 AND 5)</scope>
    <source>
        <strain>C57BL/6J</strain>
        <tissue>Amnion</tissue>
        <tissue>Corpora quadrigemina</tissue>
        <tissue>Testis</tissue>
        <tissue>Thymus</tissue>
    </source>
</reference>
<reference key="4">
    <citation type="submission" date="2005-07" db="EMBL/GenBank/DDBJ databases">
        <authorList>
            <person name="Mural R.J."/>
            <person name="Adams M.D."/>
            <person name="Myers E.W."/>
            <person name="Smith H.O."/>
            <person name="Venter J.C."/>
        </authorList>
    </citation>
    <scope>NUCLEOTIDE SEQUENCE [LARGE SCALE GENOMIC DNA]</scope>
</reference>
<reference key="5">
    <citation type="journal article" date="2004" name="Genome Res.">
        <title>The status, quality, and expansion of the NIH full-length cDNA project: the Mammalian Gene Collection (MGC).</title>
        <authorList>
            <consortium name="The MGC Project Team"/>
        </authorList>
    </citation>
    <scope>NUCLEOTIDE SEQUENCE [LARGE SCALE MRNA] (ISOFORM 1)</scope>
    <source>
        <tissue>Trophoblast stem cell</tissue>
    </source>
</reference>
<reference key="6">
    <citation type="journal article" date="2007" name="Proc. Natl. Acad. Sci. U.S.A.">
        <title>Large-scale phosphorylation analysis of mouse liver.</title>
        <authorList>
            <person name="Villen J."/>
            <person name="Beausoleil S.A."/>
            <person name="Gerber S.A."/>
            <person name="Gygi S.P."/>
        </authorList>
    </citation>
    <scope>PHOSPHORYLATION [LARGE SCALE ANALYSIS] AT SER-229</scope>
    <scope>IDENTIFICATION BY MASS SPECTROMETRY [LARGE SCALE ANALYSIS]</scope>
    <source>
        <tissue>Liver</tissue>
    </source>
</reference>
<reference key="7">
    <citation type="journal article" date="2010" name="Cell">
        <title>A tissue-specific atlas of mouse protein phosphorylation and expression.</title>
        <authorList>
            <person name="Huttlin E.L."/>
            <person name="Jedrychowski M.P."/>
            <person name="Elias J.E."/>
            <person name="Goswami T."/>
            <person name="Rad R."/>
            <person name="Beausoleil S.A."/>
            <person name="Villen J."/>
            <person name="Haas W."/>
            <person name="Sowa M.E."/>
            <person name="Gygi S.P."/>
        </authorList>
    </citation>
    <scope>PHOSPHORYLATION [LARGE SCALE ANALYSIS] AT SER-229; THR-602; SER-961 AND SER-965</scope>
    <scope>IDENTIFICATION BY MASS SPECTROMETRY [LARGE SCALE ANALYSIS]</scope>
    <source>
        <tissue>Brain</tissue>
        <tissue>Brown adipose tissue</tissue>
        <tissue>Heart</tissue>
        <tissue>Kidney</tissue>
        <tissue>Liver</tissue>
        <tissue>Lung</tissue>
        <tissue>Pancreas</tissue>
        <tissue>Spleen</tissue>
        <tissue>Testis</tissue>
    </source>
</reference>
<reference key="8">
    <citation type="journal article" date="2014" name="Hum. Mol. Genet.">
        <title>The deubiquitinase USP15 antagonizes Parkin-mediated mitochondrial ubiquitination and mitophagy.</title>
        <authorList>
            <person name="Cornelissen T."/>
            <person name="Haddad D."/>
            <person name="Wauters F."/>
            <person name="Van Humbeeck C."/>
            <person name="Mandemakers W."/>
            <person name="Koentjoro B."/>
            <person name="Sue C."/>
            <person name="Gevaert K."/>
            <person name="De Strooper B."/>
            <person name="Verstreken P."/>
            <person name="Vandenberghe W."/>
        </authorList>
    </citation>
    <scope>SUBCELLULAR LOCATION</scope>
    <scope>TISSUE SPECIFICITY</scope>
</reference>